<sequence length="191" mass="21906">MKVVIGLGNPGKKYEKTRHNIGFIAVDNLRKKFNISDEREKFQALVSEKNIDGEKVIFFKPQTFMNLSGNSVIEIINFYKLDPKKDIIVIYDDMDLSFGDIRIREKGSSGGHNGIKSIISHIGEEFIRIKCGIGAKERDAVEHVLGEFNQTEQKDLDEILEKINNCVIEMLSVQNLDRIMQKYNKKKEISK</sequence>
<organism>
    <name type="scientific">Fusobacterium nucleatum subsp. nucleatum (strain ATCC 25586 / DSM 15643 / BCRC 10681 / CIP 101130 / JCM 8532 / KCTC 2640 / LMG 13131 / VPI 4355)</name>
    <dbReference type="NCBI Taxonomy" id="190304"/>
    <lineage>
        <taxon>Bacteria</taxon>
        <taxon>Fusobacteriati</taxon>
        <taxon>Fusobacteriota</taxon>
        <taxon>Fusobacteriia</taxon>
        <taxon>Fusobacteriales</taxon>
        <taxon>Fusobacteriaceae</taxon>
        <taxon>Fusobacterium</taxon>
    </lineage>
</organism>
<comment type="function">
    <text evidence="1">Hydrolyzes ribosome-free peptidyl-tRNAs (with 1 or more amino acids incorporated), which drop off the ribosome during protein synthesis, or as a result of ribosome stalling.</text>
</comment>
<comment type="function">
    <text evidence="1">Catalyzes the release of premature peptidyl moieties from peptidyl-tRNA molecules trapped in stalled 50S ribosomal subunits, and thus maintains levels of free tRNAs and 50S ribosomes.</text>
</comment>
<comment type="catalytic activity">
    <reaction evidence="1">
        <text>an N-acyl-L-alpha-aminoacyl-tRNA + H2O = an N-acyl-L-amino acid + a tRNA + H(+)</text>
        <dbReference type="Rhea" id="RHEA:54448"/>
        <dbReference type="Rhea" id="RHEA-COMP:10123"/>
        <dbReference type="Rhea" id="RHEA-COMP:13883"/>
        <dbReference type="ChEBI" id="CHEBI:15377"/>
        <dbReference type="ChEBI" id="CHEBI:15378"/>
        <dbReference type="ChEBI" id="CHEBI:59874"/>
        <dbReference type="ChEBI" id="CHEBI:78442"/>
        <dbReference type="ChEBI" id="CHEBI:138191"/>
        <dbReference type="EC" id="3.1.1.29"/>
    </reaction>
</comment>
<comment type="subunit">
    <text evidence="1">Monomer.</text>
</comment>
<comment type="subcellular location">
    <subcellularLocation>
        <location evidence="1">Cytoplasm</location>
    </subcellularLocation>
</comment>
<comment type="similarity">
    <text evidence="1">Belongs to the PTH family.</text>
</comment>
<gene>
    <name evidence="1" type="primary">pth</name>
    <name type="ordered locus">FN1597</name>
</gene>
<dbReference type="EC" id="3.1.1.29" evidence="1"/>
<dbReference type="EMBL" id="AE009951">
    <property type="protein sequence ID" value="AAL93712.1"/>
    <property type="molecule type" value="Genomic_DNA"/>
</dbReference>
<dbReference type="RefSeq" id="NP_602413.1">
    <property type="nucleotide sequence ID" value="NC_003454.1"/>
</dbReference>
<dbReference type="RefSeq" id="WP_011015693.1">
    <property type="nucleotide sequence ID" value="NZ_OZ209243.1"/>
</dbReference>
<dbReference type="SMR" id="Q8RIJ5"/>
<dbReference type="FunCoup" id="Q8RIJ5">
    <property type="interactions" value="333"/>
</dbReference>
<dbReference type="STRING" id="190304.FN1597"/>
<dbReference type="PaxDb" id="190304-FN1597"/>
<dbReference type="EnsemblBacteria" id="AAL93712">
    <property type="protein sequence ID" value="AAL93712"/>
    <property type="gene ID" value="FN1597"/>
</dbReference>
<dbReference type="GeneID" id="79782537"/>
<dbReference type="KEGG" id="fnu:FN1597"/>
<dbReference type="PATRIC" id="fig|190304.8.peg.89"/>
<dbReference type="eggNOG" id="COG0193">
    <property type="taxonomic scope" value="Bacteria"/>
</dbReference>
<dbReference type="HOGENOM" id="CLU_062456_4_1_0"/>
<dbReference type="InParanoid" id="Q8RIJ5"/>
<dbReference type="BioCyc" id="FNUC190304:G1FZS-100-MONOMER"/>
<dbReference type="Proteomes" id="UP000002521">
    <property type="component" value="Chromosome"/>
</dbReference>
<dbReference type="GO" id="GO:0005737">
    <property type="term" value="C:cytoplasm"/>
    <property type="evidence" value="ECO:0007669"/>
    <property type="project" value="UniProtKB-SubCell"/>
</dbReference>
<dbReference type="GO" id="GO:0004045">
    <property type="term" value="F:peptidyl-tRNA hydrolase activity"/>
    <property type="evidence" value="ECO:0000318"/>
    <property type="project" value="GO_Central"/>
</dbReference>
<dbReference type="GO" id="GO:0000049">
    <property type="term" value="F:tRNA binding"/>
    <property type="evidence" value="ECO:0007669"/>
    <property type="project" value="UniProtKB-UniRule"/>
</dbReference>
<dbReference type="GO" id="GO:0006515">
    <property type="term" value="P:protein quality control for misfolded or incompletely synthesized proteins"/>
    <property type="evidence" value="ECO:0007669"/>
    <property type="project" value="UniProtKB-UniRule"/>
</dbReference>
<dbReference type="GO" id="GO:0072344">
    <property type="term" value="P:rescue of stalled ribosome"/>
    <property type="evidence" value="ECO:0007669"/>
    <property type="project" value="UniProtKB-UniRule"/>
</dbReference>
<dbReference type="CDD" id="cd00462">
    <property type="entry name" value="PTH"/>
    <property type="match status" value="1"/>
</dbReference>
<dbReference type="FunFam" id="3.40.50.1470:FF:000001">
    <property type="entry name" value="Peptidyl-tRNA hydrolase"/>
    <property type="match status" value="1"/>
</dbReference>
<dbReference type="Gene3D" id="3.40.50.1470">
    <property type="entry name" value="Peptidyl-tRNA hydrolase"/>
    <property type="match status" value="1"/>
</dbReference>
<dbReference type="HAMAP" id="MF_00083">
    <property type="entry name" value="Pept_tRNA_hydro_bact"/>
    <property type="match status" value="1"/>
</dbReference>
<dbReference type="InterPro" id="IPR001328">
    <property type="entry name" value="Pept_tRNA_hydro"/>
</dbReference>
<dbReference type="InterPro" id="IPR018171">
    <property type="entry name" value="Pept_tRNA_hydro_CS"/>
</dbReference>
<dbReference type="InterPro" id="IPR036416">
    <property type="entry name" value="Pept_tRNA_hydro_sf"/>
</dbReference>
<dbReference type="NCBIfam" id="TIGR00447">
    <property type="entry name" value="pth"/>
    <property type="match status" value="1"/>
</dbReference>
<dbReference type="PANTHER" id="PTHR17224">
    <property type="entry name" value="PEPTIDYL-TRNA HYDROLASE"/>
    <property type="match status" value="1"/>
</dbReference>
<dbReference type="PANTHER" id="PTHR17224:SF1">
    <property type="entry name" value="PEPTIDYL-TRNA HYDROLASE"/>
    <property type="match status" value="1"/>
</dbReference>
<dbReference type="Pfam" id="PF01195">
    <property type="entry name" value="Pept_tRNA_hydro"/>
    <property type="match status" value="1"/>
</dbReference>
<dbReference type="SUPFAM" id="SSF53178">
    <property type="entry name" value="Peptidyl-tRNA hydrolase-like"/>
    <property type="match status" value="1"/>
</dbReference>
<dbReference type="PROSITE" id="PS01195">
    <property type="entry name" value="PEPT_TRNA_HYDROL_1"/>
    <property type="match status" value="1"/>
</dbReference>
<dbReference type="PROSITE" id="PS01196">
    <property type="entry name" value="PEPT_TRNA_HYDROL_2"/>
    <property type="match status" value="1"/>
</dbReference>
<keyword id="KW-0963">Cytoplasm</keyword>
<keyword id="KW-0378">Hydrolase</keyword>
<keyword id="KW-1185">Reference proteome</keyword>
<keyword id="KW-0694">RNA-binding</keyword>
<keyword id="KW-0820">tRNA-binding</keyword>
<proteinExistence type="inferred from homology"/>
<accession>Q8RIJ5</accession>
<feature type="chain" id="PRO_0000187741" description="Peptidyl-tRNA hydrolase">
    <location>
        <begin position="1"/>
        <end position="191"/>
    </location>
</feature>
<feature type="active site" description="Proton acceptor" evidence="1">
    <location>
        <position position="19"/>
    </location>
</feature>
<feature type="binding site" evidence="1">
    <location>
        <position position="14"/>
    </location>
    <ligand>
        <name>tRNA</name>
        <dbReference type="ChEBI" id="CHEBI:17843"/>
    </ligand>
</feature>
<feature type="binding site" evidence="1">
    <location>
        <position position="64"/>
    </location>
    <ligand>
        <name>tRNA</name>
        <dbReference type="ChEBI" id="CHEBI:17843"/>
    </ligand>
</feature>
<feature type="binding site" evidence="1">
    <location>
        <position position="66"/>
    </location>
    <ligand>
        <name>tRNA</name>
        <dbReference type="ChEBI" id="CHEBI:17843"/>
    </ligand>
</feature>
<feature type="binding site" evidence="1">
    <location>
        <position position="113"/>
    </location>
    <ligand>
        <name>tRNA</name>
        <dbReference type="ChEBI" id="CHEBI:17843"/>
    </ligand>
</feature>
<feature type="site" description="Discriminates between blocked and unblocked aminoacyl-tRNA" evidence="1">
    <location>
        <position position="9"/>
    </location>
</feature>
<feature type="site" description="Stabilizes the basic form of H active site to accept a proton" evidence="1">
    <location>
        <position position="92"/>
    </location>
</feature>
<name>PTH_FUSNN</name>
<protein>
    <recommendedName>
        <fullName evidence="1">Peptidyl-tRNA hydrolase</fullName>
        <shortName evidence="1">Pth</shortName>
        <ecNumber evidence="1">3.1.1.29</ecNumber>
    </recommendedName>
</protein>
<evidence type="ECO:0000255" key="1">
    <source>
        <dbReference type="HAMAP-Rule" id="MF_00083"/>
    </source>
</evidence>
<reference key="1">
    <citation type="journal article" date="2002" name="J. Bacteriol.">
        <title>Genome sequence and analysis of the oral bacterium Fusobacterium nucleatum strain ATCC 25586.</title>
        <authorList>
            <person name="Kapatral V."/>
            <person name="Anderson I."/>
            <person name="Ivanova N."/>
            <person name="Reznik G."/>
            <person name="Los T."/>
            <person name="Lykidis A."/>
            <person name="Bhattacharyya A."/>
            <person name="Bartman A."/>
            <person name="Gardner W."/>
            <person name="Grechkin G."/>
            <person name="Zhu L."/>
            <person name="Vasieva O."/>
            <person name="Chu L."/>
            <person name="Kogan Y."/>
            <person name="Chaga O."/>
            <person name="Goltsman E."/>
            <person name="Bernal A."/>
            <person name="Larsen N."/>
            <person name="D'Souza M."/>
            <person name="Walunas T."/>
            <person name="Pusch G."/>
            <person name="Haselkorn R."/>
            <person name="Fonstein M."/>
            <person name="Kyrpides N.C."/>
            <person name="Overbeek R."/>
        </authorList>
    </citation>
    <scope>NUCLEOTIDE SEQUENCE [LARGE SCALE GENOMIC DNA]</scope>
    <source>
        <strain>ATCC 25586 / DSM 15643 / BCRC 10681 / CIP 101130 / JCM 8532 / KCTC 2640 / LMG 13131 / VPI 4355</strain>
    </source>
</reference>